<accession>P24264</accession>
<evidence type="ECO:0000250" key="1"/>
<evidence type="ECO:0000256" key="2">
    <source>
        <dbReference type="SAM" id="MobiDB-lite"/>
    </source>
</evidence>
<evidence type="ECO:0000305" key="3"/>
<evidence type="ECO:0007829" key="4">
    <source>
        <dbReference type="PDB" id="1XOK"/>
    </source>
</evidence>
<keyword id="KW-0002">3D-structure</keyword>
<keyword id="KW-0007">Acetylation</keyword>
<keyword id="KW-0167">Capsid protein</keyword>
<keyword id="KW-0687">Ribonucleoprotein</keyword>
<keyword id="KW-0694">RNA-binding</keyword>
<keyword id="KW-1142">T=3 icosahedral capsid protein</keyword>
<keyword id="KW-0543">Viral nucleoprotein</keyword>
<keyword id="KW-0946">Virion</keyword>
<dbReference type="EMBL" id="M59241">
    <property type="protein sequence ID" value="AAA46288.1"/>
    <property type="molecule type" value="Genomic_RNA"/>
</dbReference>
<dbReference type="PIR" id="B37948">
    <property type="entry name" value="VCFMYS"/>
</dbReference>
<dbReference type="PDB" id="1XOK">
    <property type="method" value="X-ray"/>
    <property type="resolution" value="3.00 A"/>
    <property type="chains" value="C/D=2-27"/>
</dbReference>
<dbReference type="PDBsum" id="1XOK"/>
<dbReference type="SMR" id="P24264"/>
<dbReference type="EvolutionaryTrace" id="P24264"/>
<dbReference type="GO" id="GO:1990904">
    <property type="term" value="C:ribonucleoprotein complex"/>
    <property type="evidence" value="ECO:0007669"/>
    <property type="project" value="UniProtKB-KW"/>
</dbReference>
<dbReference type="GO" id="GO:0039617">
    <property type="term" value="C:T=3 icosahedral viral capsid"/>
    <property type="evidence" value="ECO:0007669"/>
    <property type="project" value="UniProtKB-KW"/>
</dbReference>
<dbReference type="GO" id="GO:0019013">
    <property type="term" value="C:viral nucleocapsid"/>
    <property type="evidence" value="ECO:0007669"/>
    <property type="project" value="UniProtKB-KW"/>
</dbReference>
<dbReference type="GO" id="GO:0003723">
    <property type="term" value="F:RNA binding"/>
    <property type="evidence" value="ECO:0007669"/>
    <property type="project" value="UniProtKB-KW"/>
</dbReference>
<protein>
    <recommendedName>
        <fullName>Capsid protein</fullName>
        <shortName>CP</shortName>
    </recommendedName>
    <alternativeName>
        <fullName>Coat protein</fullName>
    </alternativeName>
</protein>
<name>CAPSD_AMVYS</name>
<organism>
    <name type="scientific">Alfalfa mosaic virus (strain YSMV)</name>
    <dbReference type="NCBI Taxonomy" id="12325"/>
    <lineage>
        <taxon>Viruses</taxon>
        <taxon>Riboviria</taxon>
        <taxon>Orthornavirae</taxon>
        <taxon>Kitrinoviricota</taxon>
        <taxon>Alsuviricetes</taxon>
        <taxon>Martellivirales</taxon>
        <taxon>Bromoviridae</taxon>
        <taxon>Alfamovirus</taxon>
        <taxon>Alfalfa mosaic virus</taxon>
    </lineage>
</organism>
<comment type="function">
    <text evidence="1">Capsid protein. Binds to the to the 3' end of the nonpolyadenylated viral RNA and is involved in viral RNA translation initiation. Probably binds RNA and plays a role in packaging (By similarity).</text>
</comment>
<comment type="subcellular location">
    <subcellularLocation>
        <location evidence="3">Virion</location>
    </subcellularLocation>
</comment>
<comment type="similarity">
    <text evidence="3">Belongs to the alphamovirus/ilarvirus capsid protein family.</text>
</comment>
<feature type="initiator methionine" description="Removed; by host" evidence="1">
    <location>
        <position position="1"/>
    </location>
</feature>
<feature type="chain" id="PRO_0000083192" description="Capsid protein">
    <location>
        <begin position="2"/>
        <end position="221"/>
    </location>
</feature>
<feature type="region of interest" description="Disordered" evidence="2">
    <location>
        <begin position="1"/>
        <end position="24"/>
    </location>
</feature>
<feature type="modified residue" description="N-acetylserine; by host" evidence="1">
    <location>
        <position position="2"/>
    </location>
</feature>
<feature type="helix" evidence="4">
    <location>
        <begin position="17"/>
        <end position="26"/>
    </location>
</feature>
<proteinExistence type="evidence at protein level"/>
<gene>
    <name type="ORF">ORF3b</name>
</gene>
<sequence length="221" mass="24352">MSSSQKKAGGKAGKPTKRSQNYAALRKARLPKPPALKVPVAKPTNTILPQTGCVWQSLGTPLSLSSFNGLGVRFLYSFLKDFAGPRILEEDLIYRMVFSITPSHAGTFCLTDDVTTEDGRAVAHGNPMQEFPHGAFHANEKFGFELVFTAPTHAGMQNQNFKHSYAVALCLDFDAQPEGSKNPSYRFNEVWVERKAFPRAGPLRSLITVGLLDEADDLDRH</sequence>
<organismHost>
    <name type="scientific">Apium graveolens</name>
    <name type="common">Celery</name>
    <dbReference type="NCBI Taxonomy" id="4045"/>
</organismHost>
<organismHost>
    <name type="scientific">Astragalus glycyphyllos</name>
    <name type="common">Wild liquorice</name>
    <dbReference type="NCBI Taxonomy" id="83862"/>
</organismHost>
<organismHost>
    <name type="scientific">Capsicum annuum</name>
    <name type="common">Capsicum pepper</name>
    <dbReference type="NCBI Taxonomy" id="4072"/>
</organismHost>
<organismHost>
    <name type="scientific">Caryopteris incana</name>
    <dbReference type="NCBI Taxonomy" id="41386"/>
</organismHost>
<organismHost>
    <name type="scientific">Cicer arietinum</name>
    <name type="common">Chickpea</name>
    <name type="synonym">Garbanzo</name>
    <dbReference type="NCBI Taxonomy" id="3827"/>
</organismHost>
<organismHost>
    <name type="scientific">Glycine max</name>
    <name type="common">Soybean</name>
    <name type="synonym">Glycine hispida</name>
    <dbReference type="NCBI Taxonomy" id="3847"/>
</organismHost>
<organismHost>
    <name type="scientific">Lablab purpureus</name>
    <name type="common">Hyacinth bean</name>
    <name type="synonym">Dolichos lablab</name>
    <dbReference type="NCBI Taxonomy" id="35936"/>
</organismHost>
<organismHost>
    <name type="scientific">Lactuca sativa</name>
    <name type="common">Garden lettuce</name>
    <dbReference type="NCBI Taxonomy" id="4236"/>
</organismHost>
<organismHost>
    <name type="scientific">Lens culinaris</name>
    <name type="common">Lentil</name>
    <name type="synonym">Cicer lens</name>
    <dbReference type="NCBI Taxonomy" id="3864"/>
</organismHost>
<organismHost>
    <name type="scientific">Lupinus</name>
    <dbReference type="NCBI Taxonomy" id="3869"/>
</organismHost>
<organismHost>
    <name type="scientific">Malva parviflora</name>
    <name type="common">Little mallow</name>
    <name type="synonym">Cheeseweed mallow</name>
    <dbReference type="NCBI Taxonomy" id="145753"/>
</organismHost>
<organismHost>
    <name type="scientific">Medicago sativa</name>
    <name type="common">Alfalfa</name>
    <dbReference type="NCBI Taxonomy" id="3879"/>
</organismHost>
<organismHost>
    <name type="scientific">Nicotiana tabacum</name>
    <name type="common">Common tobacco</name>
    <dbReference type="NCBI Taxonomy" id="4097"/>
</organismHost>
<organismHost>
    <name type="scientific">Phaseolus vulgaris</name>
    <name type="common">Kidney bean</name>
    <name type="synonym">French bean</name>
    <dbReference type="NCBI Taxonomy" id="3885"/>
</organismHost>
<organismHost>
    <name type="scientific">Philadelphus</name>
    <dbReference type="NCBI Taxonomy" id="23113"/>
</organismHost>
<organismHost>
    <name type="scientific">Pisum sativum</name>
    <name type="common">Garden pea</name>
    <name type="synonym">Lathyrus oleraceus</name>
    <dbReference type="NCBI Taxonomy" id="3888"/>
</organismHost>
<organismHost>
    <name type="scientific">Solanum lycopersicum</name>
    <name type="common">Tomato</name>
    <name type="synonym">Lycopersicon esculentum</name>
    <dbReference type="NCBI Taxonomy" id="4081"/>
</organismHost>
<organismHost>
    <name type="scientific">Solanum tuberosum</name>
    <name type="common">Potato</name>
    <dbReference type="NCBI Taxonomy" id="4113"/>
</organismHost>
<organismHost>
    <name type="scientific">Trifolium incarnatum</name>
    <name type="common">Crimson clover</name>
    <dbReference type="NCBI Taxonomy" id="60916"/>
</organismHost>
<organismHost>
    <name type="scientific">Trifolium repens</name>
    <name type="common">Creeping white clover</name>
    <dbReference type="NCBI Taxonomy" id="3899"/>
</organismHost>
<organismHost>
    <name type="scientific">Viburnum opulus</name>
    <name type="common">High-bush cranberry</name>
    <dbReference type="NCBI Taxonomy" id="85293"/>
</organismHost>
<organismHost>
    <name type="scientific">Vigna radiata var. radiata</name>
    <name type="common">Mung bean</name>
    <name type="synonym">Phaseolus aureus</name>
    <dbReference type="NCBI Taxonomy" id="3916"/>
</organismHost>
<organismHost>
    <name type="scientific">Vigna unguiculata</name>
    <name type="common">Cowpea</name>
    <dbReference type="NCBI Taxonomy" id="3917"/>
</organismHost>
<reference key="1">
    <citation type="journal article" date="1991" name="Virology">
        <title>Role of alfalfa mosaic virus coat protein gene in symptom formation.</title>
        <authorList>
            <person name="Neeleman L."/>
            <person name="der Kuyl A.C."/>
            <person name="Bol J.F."/>
        </authorList>
    </citation>
    <scope>NUCLEOTIDE SEQUENCE [GENOMIC RNA]</scope>
</reference>
<reference key="2">
    <citation type="journal article" date="2004" name="Science">
        <title>Cofolding organizes alfalfa mosaic virus RNA and coat protein for replication.</title>
        <authorList>
            <person name="Guogas L.M."/>
            <person name="Filman D.J."/>
            <person name="Hogle J.M."/>
            <person name="Gehrke L."/>
        </authorList>
    </citation>
    <scope>X-RAY CRYSTALLOGRAPHY (3.0 ANGSTROMS) OF 2-26 IN COMPLEX WITH VIRAL RNA</scope>
</reference>